<reference key="1">
    <citation type="submission" date="2006-09" db="EMBL/GenBank/DDBJ databases">
        <authorList>
            <consortium name="The Klebsiella pneumonia Genome Sequencing Project"/>
            <person name="McClelland M."/>
            <person name="Sanderson E.K."/>
            <person name="Spieth J."/>
            <person name="Clifton W.S."/>
            <person name="Latreille P."/>
            <person name="Sabo A."/>
            <person name="Pepin K."/>
            <person name="Bhonagiri V."/>
            <person name="Porwollik S."/>
            <person name="Ali J."/>
            <person name="Wilson R.K."/>
        </authorList>
    </citation>
    <scope>NUCLEOTIDE SEQUENCE [LARGE SCALE GENOMIC DNA]</scope>
    <source>
        <strain>ATCC 700721 / MGH 78578</strain>
    </source>
</reference>
<gene>
    <name evidence="1" type="primary">kdpA</name>
    <name type="ordered locus">KPN78578_06990</name>
    <name type="ORF">KPN_00717</name>
</gene>
<dbReference type="EMBL" id="CP000647">
    <property type="protein sequence ID" value="ABR76160.1"/>
    <property type="molecule type" value="Genomic_DNA"/>
</dbReference>
<dbReference type="RefSeq" id="WP_012068461.1">
    <property type="nucleotide sequence ID" value="NC_009648.1"/>
</dbReference>
<dbReference type="SMR" id="A6T6D9"/>
<dbReference type="STRING" id="272620.KPN_00717"/>
<dbReference type="PaxDb" id="272620-KPN_00717"/>
<dbReference type="EnsemblBacteria" id="ABR76160">
    <property type="protein sequence ID" value="ABR76160"/>
    <property type="gene ID" value="KPN_00717"/>
</dbReference>
<dbReference type="KEGG" id="kpn:KPN_00717"/>
<dbReference type="HOGENOM" id="CLU_018614_3_0_6"/>
<dbReference type="Proteomes" id="UP000000265">
    <property type="component" value="Chromosome"/>
</dbReference>
<dbReference type="GO" id="GO:0005886">
    <property type="term" value="C:plasma membrane"/>
    <property type="evidence" value="ECO:0007669"/>
    <property type="project" value="UniProtKB-SubCell"/>
</dbReference>
<dbReference type="GO" id="GO:0008556">
    <property type="term" value="F:P-type potassium transmembrane transporter activity"/>
    <property type="evidence" value="ECO:0007669"/>
    <property type="project" value="InterPro"/>
</dbReference>
<dbReference type="GO" id="GO:0030955">
    <property type="term" value="F:potassium ion binding"/>
    <property type="evidence" value="ECO:0007669"/>
    <property type="project" value="UniProtKB-UniRule"/>
</dbReference>
<dbReference type="HAMAP" id="MF_00275">
    <property type="entry name" value="KdpA"/>
    <property type="match status" value="1"/>
</dbReference>
<dbReference type="InterPro" id="IPR004623">
    <property type="entry name" value="KdpA"/>
</dbReference>
<dbReference type="NCBIfam" id="TIGR00680">
    <property type="entry name" value="kdpA"/>
    <property type="match status" value="1"/>
</dbReference>
<dbReference type="PANTHER" id="PTHR30607">
    <property type="entry name" value="POTASSIUM-TRANSPORTING ATPASE A CHAIN"/>
    <property type="match status" value="1"/>
</dbReference>
<dbReference type="PANTHER" id="PTHR30607:SF2">
    <property type="entry name" value="POTASSIUM-TRANSPORTING ATPASE POTASSIUM-BINDING SUBUNIT"/>
    <property type="match status" value="1"/>
</dbReference>
<dbReference type="Pfam" id="PF03814">
    <property type="entry name" value="KdpA"/>
    <property type="match status" value="1"/>
</dbReference>
<dbReference type="PIRSF" id="PIRSF001294">
    <property type="entry name" value="K_ATPaseA"/>
    <property type="match status" value="1"/>
</dbReference>
<keyword id="KW-0997">Cell inner membrane</keyword>
<keyword id="KW-1003">Cell membrane</keyword>
<keyword id="KW-0406">Ion transport</keyword>
<keyword id="KW-0472">Membrane</keyword>
<keyword id="KW-0630">Potassium</keyword>
<keyword id="KW-0633">Potassium transport</keyword>
<keyword id="KW-0812">Transmembrane</keyword>
<keyword id="KW-1133">Transmembrane helix</keyword>
<keyword id="KW-0813">Transport</keyword>
<accession>A6T6D9</accession>
<proteinExistence type="inferred from homology"/>
<feature type="chain" id="PRO_1000022227" description="Potassium-transporting ATPase potassium-binding subunit">
    <location>
        <begin position="1"/>
        <end position="559"/>
    </location>
</feature>
<feature type="transmembrane region" description="Helical" evidence="1">
    <location>
        <begin position="5"/>
        <end position="25"/>
    </location>
</feature>
<feature type="transmembrane region" description="Helical" evidence="1">
    <location>
        <begin position="63"/>
        <end position="83"/>
    </location>
</feature>
<feature type="transmembrane region" description="Helical" evidence="1">
    <location>
        <begin position="131"/>
        <end position="151"/>
    </location>
</feature>
<feature type="transmembrane region" description="Helical" evidence="1">
    <location>
        <begin position="173"/>
        <end position="193"/>
    </location>
</feature>
<feature type="transmembrane region" description="Helical" evidence="1">
    <location>
        <begin position="254"/>
        <end position="274"/>
    </location>
</feature>
<feature type="transmembrane region" description="Helical" evidence="1">
    <location>
        <begin position="282"/>
        <end position="302"/>
    </location>
</feature>
<feature type="transmembrane region" description="Helical" evidence="1">
    <location>
        <begin position="327"/>
        <end position="347"/>
    </location>
</feature>
<feature type="transmembrane region" description="Helical" evidence="1">
    <location>
        <begin position="356"/>
        <end position="376"/>
    </location>
</feature>
<feature type="transmembrane region" description="Helical" evidence="1">
    <location>
        <begin position="379"/>
        <end position="399"/>
    </location>
</feature>
<feature type="transmembrane region" description="Helical" evidence="1">
    <location>
        <begin position="416"/>
        <end position="436"/>
    </location>
</feature>
<feature type="transmembrane region" description="Helical" evidence="1">
    <location>
        <begin position="483"/>
        <end position="503"/>
    </location>
</feature>
<feature type="transmembrane region" description="Helical" evidence="1">
    <location>
        <begin position="525"/>
        <end position="545"/>
    </location>
</feature>
<sequence>MAAQGFLLLASYLLVLLVLARPLGMCLARMVNDIPLPGLAGVERVLWRVAGIRAEEMGWLQYLLAILLFNALGGLALFALLMLQGVLPFNPQHLPGLSWDLALNTAISFISNTNWQAYAGESTMSYLSQMVGLTVQNFLSAATGIAVVFALTRAFARQKMSTLGNAWVDLTRITLWLLLPLSLLVALFFIQQGVPQNLQAYQPFITLEGVHQLLPMGPVASQEAIKLLGTNGGGFFNANSAHPFENPTALTNLVQMLAIFLIPTALCFAFGEVVSDRRQGRAILWAMTLIFILCVAVVMWAETRGNPHLLTLGADSSLNMEGKESRFGILASSLFAVITTAASCGAVNAMHDSFTALGGMVPMWLMQIGEVVFGGVGSGLYGMLLFVMLAVFIAGLMVGRTPEYLGKKIDVREMKMIALAILVTPTLVLLGTALAMMTDAGRAGMFNPGPHGFSEVLYAVTSAANNNGSAFAGLGAATPFWNLLLAFCMLVGRFAVIIPVMAIAGSLVAKKIQPASPGTLATHDALFIGLLIGTVLLVGALTFIPALALGPLAEHFSLL</sequence>
<protein>
    <recommendedName>
        <fullName evidence="1">Potassium-transporting ATPase potassium-binding subunit</fullName>
    </recommendedName>
    <alternativeName>
        <fullName evidence="1">ATP phosphohydrolase [potassium-transporting] A chain</fullName>
    </alternativeName>
    <alternativeName>
        <fullName evidence="1">Potassium-binding and translocating subunit A</fullName>
    </alternativeName>
    <alternativeName>
        <fullName evidence="1">Potassium-translocating ATPase A chain</fullName>
    </alternativeName>
</protein>
<evidence type="ECO:0000255" key="1">
    <source>
        <dbReference type="HAMAP-Rule" id="MF_00275"/>
    </source>
</evidence>
<organism>
    <name type="scientific">Klebsiella pneumoniae subsp. pneumoniae (strain ATCC 700721 / MGH 78578)</name>
    <dbReference type="NCBI Taxonomy" id="272620"/>
    <lineage>
        <taxon>Bacteria</taxon>
        <taxon>Pseudomonadati</taxon>
        <taxon>Pseudomonadota</taxon>
        <taxon>Gammaproteobacteria</taxon>
        <taxon>Enterobacterales</taxon>
        <taxon>Enterobacteriaceae</taxon>
        <taxon>Klebsiella/Raoultella group</taxon>
        <taxon>Klebsiella</taxon>
        <taxon>Klebsiella pneumoniae complex</taxon>
    </lineage>
</organism>
<comment type="function">
    <text evidence="1">Part of the high-affinity ATP-driven potassium transport (or Kdp) system, which catalyzes the hydrolysis of ATP coupled with the electrogenic transport of potassium into the cytoplasm. This subunit binds the periplasmic potassium ions and delivers the ions to the membrane domain of KdpB through an intramembrane tunnel.</text>
</comment>
<comment type="subunit">
    <text evidence="1">The system is composed of three essential subunits: KdpA, KdpB and KdpC.</text>
</comment>
<comment type="subcellular location">
    <subcellularLocation>
        <location evidence="1">Cell inner membrane</location>
        <topology evidence="1">Multi-pass membrane protein</topology>
    </subcellularLocation>
</comment>
<comment type="similarity">
    <text evidence="1">Belongs to the KdpA family.</text>
</comment>
<name>KDPA_KLEP7</name>